<reference evidence="3" key="1">
    <citation type="journal article" date="2010" name="Food Res. Intern.">
        <title>Production of three anti-listerial peptides by Lactobacillus curvatus in MRS broth.</title>
        <authorList>
            <person name="Ghalfi H."/>
            <person name="Benkerroum N."/>
            <person name="Ongena M."/>
            <person name="Bensaid M."/>
            <person name="Thonart P."/>
        </authorList>
    </citation>
    <scope>PROTEIN SEQUENCE</scope>
    <scope>FUNCTION</scope>
    <scope>SUBCELLULAR LOCATION</scope>
    <source>
        <strain evidence="1">CWBI-B28</strain>
    </source>
</reference>
<sequence>TPVVNPPFLQQT</sequence>
<organism>
    <name type="scientific">Latilactobacillus curvatus</name>
    <name type="common">Lactobacillus curvatus</name>
    <dbReference type="NCBI Taxonomy" id="28038"/>
    <lineage>
        <taxon>Bacteria</taxon>
        <taxon>Bacillati</taxon>
        <taxon>Bacillota</taxon>
        <taxon>Bacilli</taxon>
        <taxon>Lactobacillales</taxon>
        <taxon>Lactobacillaceae</taxon>
        <taxon>Latilactobacillus</taxon>
    </lineage>
</organism>
<feature type="peptide" id="PRO_0000223895" description="Bioactive peptide 1" evidence="1">
    <location>
        <begin position="1"/>
        <end position="12" status="greater than"/>
    </location>
</feature>
<feature type="non-terminal residue" evidence="2">
    <location>
        <position position="12"/>
    </location>
</feature>
<evidence type="ECO:0000269" key="1">
    <source ref="1"/>
</evidence>
<evidence type="ECO:0000303" key="2">
    <source ref="1"/>
</evidence>
<evidence type="ECO:0000305" key="3"/>
<comment type="function">
    <text evidence="1">Has antibacterial activity against the Gram-positive bacteria L.monocytogenes, L.lactis subsp lactis and L.curvatus H28, but not against the Gram-positive bacteria L.curvatus CWBI-B28, L.brevis and L.plantarum or the Gram-negative bacteria E.coli and Pseudomonas sp 55. Has no antifungal activity against S.cerevisiae, Penicillium sp BKS-TAN2 or A.niger.</text>
</comment>
<comment type="subcellular location">
    <subcellularLocation>
        <location evidence="1">Secreted</location>
    </subcellularLocation>
</comment>
<dbReference type="GO" id="GO:0005576">
    <property type="term" value="C:extracellular region"/>
    <property type="evidence" value="ECO:0007669"/>
    <property type="project" value="UniProtKB-SubCell"/>
</dbReference>
<dbReference type="GO" id="GO:0042742">
    <property type="term" value="P:defense response to bacterium"/>
    <property type="evidence" value="ECO:0007669"/>
    <property type="project" value="UniProtKB-KW"/>
</dbReference>
<dbReference type="GO" id="GO:0031640">
    <property type="term" value="P:killing of cells of another organism"/>
    <property type="evidence" value="ECO:0007669"/>
    <property type="project" value="UniProtKB-KW"/>
</dbReference>
<protein>
    <recommendedName>
        <fullName evidence="2">Bioactive peptide 1</fullName>
        <shortName evidence="2">BAP1</shortName>
    </recommendedName>
</protein>
<keyword id="KW-0044">Antibiotic</keyword>
<keyword id="KW-0929">Antimicrobial</keyword>
<keyword id="KW-0078">Bacteriocin</keyword>
<keyword id="KW-0903">Direct protein sequencing</keyword>
<keyword id="KW-0964">Secreted</keyword>
<name>BAP1_LATCU</name>
<proteinExistence type="evidence at protein level"/>
<accession>P84709</accession>